<keyword id="KW-0013">ADP-ribosylation</keyword>
<keyword id="KW-0025">Alternative splicing</keyword>
<keyword id="KW-0131">Cell cycle</keyword>
<keyword id="KW-0132">Cell division</keyword>
<keyword id="KW-0479">Metal-binding</keyword>
<keyword id="KW-0498">Mitosis</keyword>
<keyword id="KW-0539">Nucleus</keyword>
<keyword id="KW-0597">Phosphoprotein</keyword>
<keyword id="KW-1185">Reference proteome</keyword>
<keyword id="KW-0808">Transferase</keyword>
<keyword id="KW-0832">Ubl conjugation</keyword>
<keyword id="KW-0833">Ubl conjugation pathway</keyword>
<keyword id="KW-0862">Zinc</keyword>
<keyword id="KW-0863">Zinc-finger</keyword>
<protein>
    <recommendedName>
        <fullName>E3 ubiquitin-protein ligase CHFR</fullName>
        <ecNumber evidence="5">2.3.2.27</ecNumber>
    </recommendedName>
    <alternativeName>
        <fullName>Checkpoint with forkhead and RING finger domains protein</fullName>
    </alternativeName>
    <alternativeName>
        <fullName evidence="7">RING-type E3 ubiquitin transferase CHFR</fullName>
    </alternativeName>
</protein>
<dbReference type="EC" id="2.3.2.27" evidence="5"/>
<dbReference type="EMBL" id="AK052473">
    <property type="protein sequence ID" value="BAC35008.2"/>
    <property type="molecule type" value="mRNA"/>
</dbReference>
<dbReference type="EMBL" id="AK077629">
    <property type="protein sequence ID" value="BAC36912.1"/>
    <property type="molecule type" value="mRNA"/>
</dbReference>
<dbReference type="EMBL" id="AK147892">
    <property type="protein sequence ID" value="BAE28209.1"/>
    <property type="molecule type" value="mRNA"/>
</dbReference>
<dbReference type="EMBL" id="AK154038">
    <property type="protein sequence ID" value="BAE32331.1"/>
    <property type="molecule type" value="mRNA"/>
</dbReference>
<dbReference type="EMBL" id="AK155295">
    <property type="protein sequence ID" value="BAE33172.1"/>
    <property type="molecule type" value="mRNA"/>
</dbReference>
<dbReference type="EMBL" id="AK155525">
    <property type="protein sequence ID" value="BAE33309.1"/>
    <property type="molecule type" value="mRNA"/>
</dbReference>
<dbReference type="EMBL" id="AK169182">
    <property type="protein sequence ID" value="BAE40960.1"/>
    <property type="molecule type" value="mRNA"/>
</dbReference>
<dbReference type="EMBL" id="AK169193">
    <property type="protein sequence ID" value="BAE40969.1"/>
    <property type="molecule type" value="mRNA"/>
</dbReference>
<dbReference type="EMBL" id="CH466529">
    <property type="protein sequence ID" value="EDL20040.1"/>
    <property type="molecule type" value="Genomic_DNA"/>
</dbReference>
<dbReference type="EMBL" id="BC049792">
    <property type="protein sequence ID" value="AAH49792.1"/>
    <property type="molecule type" value="mRNA"/>
</dbReference>
<dbReference type="CCDS" id="CCDS19522.1">
    <molecule id="Q810L3-2"/>
</dbReference>
<dbReference type="CCDS" id="CCDS71637.1">
    <molecule id="Q810L3-1"/>
</dbReference>
<dbReference type="CCDS" id="CCDS80358.1">
    <molecule id="Q810L3-3"/>
</dbReference>
<dbReference type="RefSeq" id="NP_001276506.1">
    <molecule id="Q810L3-1"/>
    <property type="nucleotide sequence ID" value="NM_001289577.1"/>
</dbReference>
<dbReference type="RefSeq" id="NP_001276507.1">
    <molecule id="Q810L3-3"/>
    <property type="nucleotide sequence ID" value="NM_001289578.1"/>
</dbReference>
<dbReference type="RefSeq" id="NP_001276508.1">
    <molecule id="Q810L3-4"/>
    <property type="nucleotide sequence ID" value="NM_001289579.1"/>
</dbReference>
<dbReference type="RefSeq" id="NP_001276509.1">
    <property type="nucleotide sequence ID" value="NM_001289580.1"/>
</dbReference>
<dbReference type="RefSeq" id="NP_766305.2">
    <molecule id="Q810L3-2"/>
    <property type="nucleotide sequence ID" value="NM_172717.4"/>
</dbReference>
<dbReference type="RefSeq" id="XP_011247747.1">
    <molecule id="Q810L3-4"/>
    <property type="nucleotide sequence ID" value="XM_011249445.3"/>
</dbReference>
<dbReference type="RefSeq" id="XP_011247748.1">
    <molecule id="Q810L3-4"/>
    <property type="nucleotide sequence ID" value="XM_011249446.3"/>
</dbReference>
<dbReference type="RefSeq" id="XP_036020979.1">
    <molecule id="Q810L3-4"/>
    <property type="nucleotide sequence ID" value="XM_036165086.1"/>
</dbReference>
<dbReference type="SMR" id="Q810L3"/>
<dbReference type="BioGRID" id="231141">
    <property type="interactions" value="6"/>
</dbReference>
<dbReference type="FunCoup" id="Q810L3">
    <property type="interactions" value="2488"/>
</dbReference>
<dbReference type="STRING" id="10090.ENSMUSP00000108138"/>
<dbReference type="iPTMnet" id="Q810L3"/>
<dbReference type="PhosphoSitePlus" id="Q810L3"/>
<dbReference type="jPOST" id="Q810L3"/>
<dbReference type="PaxDb" id="10090-ENSMUSP00000108138"/>
<dbReference type="PeptideAtlas" id="Q810L3"/>
<dbReference type="ProteomicsDB" id="281613">
    <molecule id="Q810L3-1"/>
</dbReference>
<dbReference type="ProteomicsDB" id="281614">
    <molecule id="Q810L3-2"/>
</dbReference>
<dbReference type="ProteomicsDB" id="281615">
    <molecule id="Q810L3-3"/>
</dbReference>
<dbReference type="ProteomicsDB" id="281616">
    <molecule id="Q810L3-4"/>
</dbReference>
<dbReference type="Pumba" id="Q810L3"/>
<dbReference type="Antibodypedia" id="32145">
    <property type="antibodies" value="291 antibodies from 34 providers"/>
</dbReference>
<dbReference type="DNASU" id="231600"/>
<dbReference type="Ensembl" id="ENSMUST00000014812.13">
    <molecule id="Q810L3-2"/>
    <property type="protein sequence ID" value="ENSMUSP00000014812.9"/>
    <property type="gene ID" value="ENSMUSG00000014668.16"/>
</dbReference>
<dbReference type="Ensembl" id="ENSMUST00000112519.9">
    <molecule id="Q810L3-1"/>
    <property type="protein sequence ID" value="ENSMUSP00000108138.3"/>
    <property type="gene ID" value="ENSMUSG00000014668.16"/>
</dbReference>
<dbReference type="Ensembl" id="ENSMUST00000198633.5">
    <molecule id="Q810L3-3"/>
    <property type="protein sequence ID" value="ENSMUSP00000143480.2"/>
    <property type="gene ID" value="ENSMUSG00000014668.16"/>
</dbReference>
<dbReference type="GeneID" id="231600"/>
<dbReference type="KEGG" id="mmu:231600"/>
<dbReference type="UCSC" id="uc008ypv.3">
    <molecule id="Q810L3-1"/>
    <property type="organism name" value="mouse"/>
</dbReference>
<dbReference type="UCSC" id="uc008ypw.3">
    <molecule id="Q810L3-2"/>
    <property type="organism name" value="mouse"/>
</dbReference>
<dbReference type="UCSC" id="uc008ypz.3">
    <molecule id="Q810L3-3"/>
    <property type="organism name" value="mouse"/>
</dbReference>
<dbReference type="AGR" id="MGI:2444898"/>
<dbReference type="CTD" id="55743"/>
<dbReference type="MGI" id="MGI:2444898">
    <property type="gene designation" value="Chfr"/>
</dbReference>
<dbReference type="VEuPathDB" id="HostDB:ENSMUSG00000014668"/>
<dbReference type="eggNOG" id="KOG0802">
    <property type="taxonomic scope" value="Eukaryota"/>
</dbReference>
<dbReference type="GeneTree" id="ENSGT00400000022306"/>
<dbReference type="InParanoid" id="Q810L3"/>
<dbReference type="OMA" id="SNYWFPG"/>
<dbReference type="OrthoDB" id="1305878at2759"/>
<dbReference type="PhylomeDB" id="Q810L3"/>
<dbReference type="TreeFam" id="TF330957"/>
<dbReference type="UniPathway" id="UPA00143"/>
<dbReference type="BioGRID-ORCS" id="231600">
    <property type="hits" value="4 hits in 77 CRISPR screens"/>
</dbReference>
<dbReference type="ChiTaRS" id="Chfr">
    <property type="organism name" value="mouse"/>
</dbReference>
<dbReference type="PRO" id="PR:Q810L3"/>
<dbReference type="Proteomes" id="UP000000589">
    <property type="component" value="Chromosome 5"/>
</dbReference>
<dbReference type="RNAct" id="Q810L3">
    <property type="molecule type" value="protein"/>
</dbReference>
<dbReference type="Bgee" id="ENSMUSG00000014668">
    <property type="expression patterns" value="Expressed in spermatocyte and 250 other cell types or tissues"/>
</dbReference>
<dbReference type="ExpressionAtlas" id="Q810L3">
    <property type="expression patterns" value="baseline and differential"/>
</dbReference>
<dbReference type="GO" id="GO:0005634">
    <property type="term" value="C:nucleus"/>
    <property type="evidence" value="ECO:0000250"/>
    <property type="project" value="UniProtKB"/>
</dbReference>
<dbReference type="GO" id="GO:0016605">
    <property type="term" value="C:PML body"/>
    <property type="evidence" value="ECO:0000250"/>
    <property type="project" value="UniProtKB"/>
</dbReference>
<dbReference type="GO" id="GO:0000166">
    <property type="term" value="F:nucleotide binding"/>
    <property type="evidence" value="ECO:0000250"/>
    <property type="project" value="UniProtKB"/>
</dbReference>
<dbReference type="GO" id="GO:0061630">
    <property type="term" value="F:ubiquitin protein ligase activity"/>
    <property type="evidence" value="ECO:0000315"/>
    <property type="project" value="MGI"/>
</dbReference>
<dbReference type="GO" id="GO:0008270">
    <property type="term" value="F:zinc ion binding"/>
    <property type="evidence" value="ECO:0007669"/>
    <property type="project" value="UniProtKB-KW"/>
</dbReference>
<dbReference type="GO" id="GO:0051301">
    <property type="term" value="P:cell division"/>
    <property type="evidence" value="ECO:0007669"/>
    <property type="project" value="UniProtKB-KW"/>
</dbReference>
<dbReference type="GO" id="GO:0044779">
    <property type="term" value="P:meiotic spindle checkpoint signaling"/>
    <property type="evidence" value="ECO:0007669"/>
    <property type="project" value="Ensembl"/>
</dbReference>
<dbReference type="GO" id="GO:0000278">
    <property type="term" value="P:mitotic cell cycle"/>
    <property type="evidence" value="ECO:0000315"/>
    <property type="project" value="MGI"/>
</dbReference>
<dbReference type="GO" id="GO:0044818">
    <property type="term" value="P:mitotic G2/M transition checkpoint"/>
    <property type="evidence" value="ECO:0000250"/>
    <property type="project" value="UniProtKB"/>
</dbReference>
<dbReference type="GO" id="GO:0032436">
    <property type="term" value="P:positive regulation of proteasomal ubiquitin-dependent protein catabolic process"/>
    <property type="evidence" value="ECO:0000314"/>
    <property type="project" value="MGI"/>
</dbReference>
<dbReference type="GO" id="GO:0031398">
    <property type="term" value="P:positive regulation of protein ubiquitination"/>
    <property type="evidence" value="ECO:0000314"/>
    <property type="project" value="MGI"/>
</dbReference>
<dbReference type="GO" id="GO:0031648">
    <property type="term" value="P:protein destabilization"/>
    <property type="evidence" value="ECO:0000314"/>
    <property type="project" value="MGI"/>
</dbReference>
<dbReference type="GO" id="GO:0000209">
    <property type="term" value="P:protein polyubiquitination"/>
    <property type="evidence" value="ECO:0000314"/>
    <property type="project" value="MGI"/>
</dbReference>
<dbReference type="GO" id="GO:0006511">
    <property type="term" value="P:ubiquitin-dependent protein catabolic process"/>
    <property type="evidence" value="ECO:0000314"/>
    <property type="project" value="MGI"/>
</dbReference>
<dbReference type="CDD" id="cd22672">
    <property type="entry name" value="FHA_CHFR"/>
    <property type="match status" value="1"/>
</dbReference>
<dbReference type="CDD" id="cd16503">
    <property type="entry name" value="RING-HC_CHFR"/>
    <property type="match status" value="1"/>
</dbReference>
<dbReference type="FunFam" id="3.30.40.10:FF:000203">
    <property type="entry name" value="E3 ubiquitin-protein ligase CHFR isoform X1"/>
    <property type="match status" value="1"/>
</dbReference>
<dbReference type="FunFam" id="3.30.40.140:FF:000001">
    <property type="entry name" value="E3 ubiquitin-protein ligase CHFR isoform X1"/>
    <property type="match status" value="1"/>
</dbReference>
<dbReference type="FunFam" id="2.60.200.20:FF:000022">
    <property type="entry name" value="E3 ubiquitin-protein ligase CHFR isoform X2"/>
    <property type="match status" value="1"/>
</dbReference>
<dbReference type="Gene3D" id="2.60.200.20">
    <property type="match status" value="1"/>
</dbReference>
<dbReference type="Gene3D" id="3.30.40.140">
    <property type="match status" value="1"/>
</dbReference>
<dbReference type="Gene3D" id="3.30.40.10">
    <property type="entry name" value="Zinc/RING finger domain, C3HC4 (zinc finger)"/>
    <property type="match status" value="1"/>
</dbReference>
<dbReference type="InterPro" id="IPR040909">
    <property type="entry name" value="CHFR_Znf-CRD"/>
</dbReference>
<dbReference type="InterPro" id="IPR052256">
    <property type="entry name" value="E3_ubiquitin-ligase_CHFR"/>
</dbReference>
<dbReference type="InterPro" id="IPR000253">
    <property type="entry name" value="FHA_dom"/>
</dbReference>
<dbReference type="InterPro" id="IPR008984">
    <property type="entry name" value="SMAD_FHA_dom_sf"/>
</dbReference>
<dbReference type="InterPro" id="IPR001841">
    <property type="entry name" value="Znf_RING"/>
</dbReference>
<dbReference type="InterPro" id="IPR013083">
    <property type="entry name" value="Znf_RING/FYVE/PHD"/>
</dbReference>
<dbReference type="InterPro" id="IPR017907">
    <property type="entry name" value="Znf_RING_CS"/>
</dbReference>
<dbReference type="PANTHER" id="PTHR16079:SF4">
    <property type="entry name" value="E3 UBIQUITIN-PROTEIN LIGASE CHFR"/>
    <property type="match status" value="1"/>
</dbReference>
<dbReference type="PANTHER" id="PTHR16079">
    <property type="entry name" value="UBIQUITIN LIGASE PROTEIN CHFR"/>
    <property type="match status" value="1"/>
</dbReference>
<dbReference type="Pfam" id="PF00498">
    <property type="entry name" value="FHA"/>
    <property type="match status" value="1"/>
</dbReference>
<dbReference type="Pfam" id="PF13923">
    <property type="entry name" value="zf-C3HC4_2"/>
    <property type="match status" value="1"/>
</dbReference>
<dbReference type="Pfam" id="PF17979">
    <property type="entry name" value="zf-CRD"/>
    <property type="match status" value="1"/>
</dbReference>
<dbReference type="SMART" id="SM00240">
    <property type="entry name" value="FHA"/>
    <property type="match status" value="1"/>
</dbReference>
<dbReference type="SMART" id="SM00184">
    <property type="entry name" value="RING"/>
    <property type="match status" value="2"/>
</dbReference>
<dbReference type="SUPFAM" id="SSF57850">
    <property type="entry name" value="RING/U-box"/>
    <property type="match status" value="1"/>
</dbReference>
<dbReference type="SUPFAM" id="SSF49879">
    <property type="entry name" value="SMAD/FHA domain"/>
    <property type="match status" value="1"/>
</dbReference>
<dbReference type="PROSITE" id="PS50006">
    <property type="entry name" value="FHA_DOMAIN"/>
    <property type="match status" value="1"/>
</dbReference>
<dbReference type="PROSITE" id="PS00518">
    <property type="entry name" value="ZF_RING_1"/>
    <property type="match status" value="1"/>
</dbReference>
<dbReference type="PROSITE" id="PS50089">
    <property type="entry name" value="ZF_RING_2"/>
    <property type="match status" value="1"/>
</dbReference>
<sequence>MELHGEEQPPPPQEPWGRLLRLGAEEDEPQILLWKREWTIGRRRGCDLSFPSNKLVSGDHCKLTVDEISGEVTLEDTSTNGTVINKLQVVKKQTYPLQSGDIIYLVYRKNEPEHNVAYLYESLSGKQSLTQDSLEANKENMFHVTKDCSGPGQGDDPQVPLLSPMAQTCLEEPQPSTSTSDLLPTASTSSTEPELTSAGQKHSSSSGPGNTSISPKGRSSLVANGELSSLSPVFQDKEASFSLLESKDHEELEPAKKKMKGDGELDTNLQLLVSGQRGNAQTSSEDVKDASVKPDKMEETLTCIICQDLLHDCVSLQPCMHTFCAACYSGWMERSSLCPTCRCPVERICKNHILNNLVEAYLIQHPDKSRSEEDVRSMDARNKITQDMLQPKVRRSFSDEEGSSEDLLELSDVDSESSDISQPYIVCRQCPEYRRQAVQSLPCPVPESELGATLALGGEAPSTSASLPTAAPDYMCPLQGSHAICTCCFQPMPDRRAEREQDPRVAPQQCAVCLQPFCHLYWGCTRTGCFGCLAPFCELNLGDKCLDGVLNNNNYESDILKNYLATRGLTWKSVLTESLLALQRGVFMLSDYRITGNTVLCYCCGLRSFRELTYQYRQNIPASELPVTVTSRPDCYWGRNCRTQVKAHHAMKFNHICEQTRFKN</sequence>
<feature type="chain" id="PRO_0000055873" description="E3 ubiquitin-protein ligase CHFR">
    <location>
        <begin position="1"/>
        <end position="664"/>
    </location>
</feature>
<feature type="domain" description="FHA" evidence="2">
    <location>
        <begin position="38"/>
        <end position="89"/>
    </location>
</feature>
<feature type="zinc finger region" description="RING-type" evidence="3">
    <location>
        <begin position="303"/>
        <end position="342"/>
    </location>
</feature>
<feature type="zinc finger region" description="PBZ-type">
    <location>
        <begin position="633"/>
        <end position="655"/>
    </location>
</feature>
<feature type="region of interest" description="Disordered" evidence="4">
    <location>
        <begin position="170"/>
        <end position="220"/>
    </location>
</feature>
<feature type="region of interest" description="Disordered" evidence="4">
    <location>
        <begin position="245"/>
        <end position="264"/>
    </location>
</feature>
<feature type="region of interest" description="Disordered" evidence="4">
    <location>
        <begin position="389"/>
        <end position="413"/>
    </location>
</feature>
<feature type="compositionally biased region" description="Polar residues" evidence="4">
    <location>
        <begin position="174"/>
        <end position="202"/>
    </location>
</feature>
<feature type="compositionally biased region" description="Low complexity" evidence="4">
    <location>
        <begin position="203"/>
        <end position="215"/>
    </location>
</feature>
<feature type="compositionally biased region" description="Basic and acidic residues" evidence="4">
    <location>
        <begin position="245"/>
        <end position="263"/>
    </location>
</feature>
<feature type="compositionally biased region" description="Acidic residues" evidence="4">
    <location>
        <begin position="399"/>
        <end position="413"/>
    </location>
</feature>
<feature type="modified residue" description="Phosphothreonine" evidence="8">
    <location>
        <position position="385"/>
    </location>
</feature>
<feature type="splice variant" id="VSP_038128" description="In isoform 4." evidence="6">
    <location>
        <begin position="1"/>
        <end position="140"/>
    </location>
</feature>
<feature type="splice variant" id="VSP_038129" description="In isoform 3." evidence="6">
    <location>
        <begin position="135"/>
        <end position="206"/>
    </location>
</feature>
<feature type="splice variant" id="VSP_009351" description="In isoform 2." evidence="6">
    <location>
        <position position="470"/>
    </location>
</feature>
<feature type="sequence conflict" description="In Ref. 1; BAC36912." evidence="7" ref="1">
    <original>Q</original>
    <variation>H</variation>
    <location>
        <position position="98"/>
    </location>
</feature>
<feature type="sequence conflict" description="In Ref. 1; BAE32331." evidence="7" ref="1">
    <original>L</original>
    <variation>F</variation>
    <location>
        <position position="230"/>
    </location>
</feature>
<feature type="sequence conflict" description="In Ref. 1; BAE28209." evidence="7" ref="1">
    <original>E</original>
    <variation>V</variation>
    <location>
        <position position="333"/>
    </location>
</feature>
<feature type="sequence conflict" description="In Ref. 1; BAC36912." evidence="7" ref="1">
    <original>G</original>
    <variation>C</variation>
    <location>
        <position position="531"/>
    </location>
</feature>
<name>CHFR_MOUSE</name>
<proteinExistence type="evidence at protein level"/>
<comment type="function">
    <text evidence="1 5">E3 ubiquitin-protein ligase that functions in the antephase checkpoint by actively delaying passage into mitosis in response to microtubule poisons. Acts in early prophase before chromosome condensation, when the centrosome move apart from each other along the periphery of the nucleus. Probably involved in signaling the presence of mitotic stress caused by microtubule poisons by mediating the 'Lys-48'-linked ubiquitination of target proteins, leading to their degradation by the proteasome. Promotes the ubiquitination and subsequent degradation of AURKA and PLK1. Probably acts as a tumor suppressor, possibly by mediating the polyubiquitination of HDAC1, leading to its degradation. May also promote the formation of 'Lys-63'-linked polyubiquitin chains and functions with the specific ubiquitin-conjugating UBC13-MMS2 (UBE2N-UBE2V2) heterodimer. Substrates that are polyubiquitinated at 'Lys-63' are usually not targeted for degradation, but are rather involved in signaling cellular stress (By similarity).</text>
</comment>
<comment type="catalytic activity">
    <reaction evidence="5">
        <text>S-ubiquitinyl-[E2 ubiquitin-conjugating enzyme]-L-cysteine + [acceptor protein]-L-lysine = [E2 ubiquitin-conjugating enzyme]-L-cysteine + N(6)-ubiquitinyl-[acceptor protein]-L-lysine.</text>
        <dbReference type="EC" id="2.3.2.27"/>
    </reaction>
</comment>
<comment type="pathway">
    <text>Protein modification; protein ubiquitination.</text>
</comment>
<comment type="subunit">
    <text evidence="1">Interacts with HDAC1 and HDAC2. Interacts with PML (with sumoylated form of PML).</text>
</comment>
<comment type="subcellular location">
    <subcellularLocation>
        <location evidence="1">Nucleus</location>
        <location evidence="1">PML body</location>
    </subcellularLocation>
</comment>
<comment type="alternative products">
    <event type="alternative splicing"/>
    <isoform>
        <id>Q810L3-1</id>
        <name>1</name>
        <sequence type="displayed"/>
    </isoform>
    <isoform>
        <id>Q810L3-2</id>
        <name>2</name>
        <sequence type="described" ref="VSP_009351"/>
    </isoform>
    <isoform>
        <id>Q810L3-3</id>
        <name>3</name>
        <sequence type="described" ref="VSP_038129"/>
    </isoform>
    <isoform>
        <id>Q810L3-4</id>
        <name>4</name>
        <sequence type="described" ref="VSP_038128"/>
    </isoform>
</comment>
<comment type="domain">
    <text evidence="1">The PBZ-type zinc finger (also named CYR) mediates non-covalent poly(ADP-ribose)-binding. Poly(ADP-ribose)-binding is dependent on the presence of zinc and is required for its function in antephase checkpoint.</text>
</comment>
<comment type="domain">
    <text evidence="1">The FHA domain plays a key role in the anti-proliferative properties of the protein and is involved in initiating a cell cycle arrest at G2/M. The FHA domain may be required to interact with phosphorylated proteins.</text>
</comment>
<comment type="PTM">
    <text evidence="1">Poly-ADP-ribosylated. In addition to binding non covalently poly(ADP-ribose) via its PBZ-type zinc finger, the protein is also covalently poly-ADP-ribosylated by PARP1.</text>
</comment>
<comment type="PTM">
    <text evidence="1">Autoubiquitinated; may regulate its cellular level.</text>
</comment>
<comment type="PTM">
    <text evidence="1">Phosphorylated by PKB. Phosphorylation may affect its E3 ligase activity.</text>
</comment>
<comment type="disruption phenotype">
    <text evidence="5">Mice are viable and have no obvious developmental defects. They are however cancer-prone and develop spontaneous tumors. They also display increased skin tumor incidence after treatment with dimethylbenz(a)anthracene.</text>
</comment>
<comment type="similarity">
    <text evidence="7">Belongs to the CHFR family.</text>
</comment>
<gene>
    <name type="primary">Chfr</name>
</gene>
<accession>Q810L3</accession>
<accession>Q3TFD8</accession>
<accession>Q3U233</accession>
<accession>Q3U4U9</accession>
<accession>Q3UGJ9</accession>
<accession>Q8BJZ9</accession>
<accession>Q8BWH4</accession>
<organism>
    <name type="scientific">Mus musculus</name>
    <name type="common">Mouse</name>
    <dbReference type="NCBI Taxonomy" id="10090"/>
    <lineage>
        <taxon>Eukaryota</taxon>
        <taxon>Metazoa</taxon>
        <taxon>Chordata</taxon>
        <taxon>Craniata</taxon>
        <taxon>Vertebrata</taxon>
        <taxon>Euteleostomi</taxon>
        <taxon>Mammalia</taxon>
        <taxon>Eutheria</taxon>
        <taxon>Euarchontoglires</taxon>
        <taxon>Glires</taxon>
        <taxon>Rodentia</taxon>
        <taxon>Myomorpha</taxon>
        <taxon>Muroidea</taxon>
        <taxon>Muridae</taxon>
        <taxon>Murinae</taxon>
        <taxon>Mus</taxon>
        <taxon>Mus</taxon>
    </lineage>
</organism>
<reference key="1">
    <citation type="journal article" date="2005" name="Science">
        <title>The transcriptional landscape of the mammalian genome.</title>
        <authorList>
            <person name="Carninci P."/>
            <person name="Kasukawa T."/>
            <person name="Katayama S."/>
            <person name="Gough J."/>
            <person name="Frith M.C."/>
            <person name="Maeda N."/>
            <person name="Oyama R."/>
            <person name="Ravasi T."/>
            <person name="Lenhard B."/>
            <person name="Wells C."/>
            <person name="Kodzius R."/>
            <person name="Shimokawa K."/>
            <person name="Bajic V.B."/>
            <person name="Brenner S.E."/>
            <person name="Batalov S."/>
            <person name="Forrest A.R."/>
            <person name="Zavolan M."/>
            <person name="Davis M.J."/>
            <person name="Wilming L.G."/>
            <person name="Aidinis V."/>
            <person name="Allen J.E."/>
            <person name="Ambesi-Impiombato A."/>
            <person name="Apweiler R."/>
            <person name="Aturaliya R.N."/>
            <person name="Bailey T.L."/>
            <person name="Bansal M."/>
            <person name="Baxter L."/>
            <person name="Beisel K.W."/>
            <person name="Bersano T."/>
            <person name="Bono H."/>
            <person name="Chalk A.M."/>
            <person name="Chiu K.P."/>
            <person name="Choudhary V."/>
            <person name="Christoffels A."/>
            <person name="Clutterbuck D.R."/>
            <person name="Crowe M.L."/>
            <person name="Dalla E."/>
            <person name="Dalrymple B.P."/>
            <person name="de Bono B."/>
            <person name="Della Gatta G."/>
            <person name="di Bernardo D."/>
            <person name="Down T."/>
            <person name="Engstrom P."/>
            <person name="Fagiolini M."/>
            <person name="Faulkner G."/>
            <person name="Fletcher C.F."/>
            <person name="Fukushima T."/>
            <person name="Furuno M."/>
            <person name="Futaki S."/>
            <person name="Gariboldi M."/>
            <person name="Georgii-Hemming P."/>
            <person name="Gingeras T.R."/>
            <person name="Gojobori T."/>
            <person name="Green R.E."/>
            <person name="Gustincich S."/>
            <person name="Harbers M."/>
            <person name="Hayashi Y."/>
            <person name="Hensch T.K."/>
            <person name="Hirokawa N."/>
            <person name="Hill D."/>
            <person name="Huminiecki L."/>
            <person name="Iacono M."/>
            <person name="Ikeo K."/>
            <person name="Iwama A."/>
            <person name="Ishikawa T."/>
            <person name="Jakt M."/>
            <person name="Kanapin A."/>
            <person name="Katoh M."/>
            <person name="Kawasawa Y."/>
            <person name="Kelso J."/>
            <person name="Kitamura H."/>
            <person name="Kitano H."/>
            <person name="Kollias G."/>
            <person name="Krishnan S.P."/>
            <person name="Kruger A."/>
            <person name="Kummerfeld S.K."/>
            <person name="Kurochkin I.V."/>
            <person name="Lareau L.F."/>
            <person name="Lazarevic D."/>
            <person name="Lipovich L."/>
            <person name="Liu J."/>
            <person name="Liuni S."/>
            <person name="McWilliam S."/>
            <person name="Madan Babu M."/>
            <person name="Madera M."/>
            <person name="Marchionni L."/>
            <person name="Matsuda H."/>
            <person name="Matsuzawa S."/>
            <person name="Miki H."/>
            <person name="Mignone F."/>
            <person name="Miyake S."/>
            <person name="Morris K."/>
            <person name="Mottagui-Tabar S."/>
            <person name="Mulder N."/>
            <person name="Nakano N."/>
            <person name="Nakauchi H."/>
            <person name="Ng P."/>
            <person name="Nilsson R."/>
            <person name="Nishiguchi S."/>
            <person name="Nishikawa S."/>
            <person name="Nori F."/>
            <person name="Ohara O."/>
            <person name="Okazaki Y."/>
            <person name="Orlando V."/>
            <person name="Pang K.C."/>
            <person name="Pavan W.J."/>
            <person name="Pavesi G."/>
            <person name="Pesole G."/>
            <person name="Petrovsky N."/>
            <person name="Piazza S."/>
            <person name="Reed J."/>
            <person name="Reid J.F."/>
            <person name="Ring B.Z."/>
            <person name="Ringwald M."/>
            <person name="Rost B."/>
            <person name="Ruan Y."/>
            <person name="Salzberg S.L."/>
            <person name="Sandelin A."/>
            <person name="Schneider C."/>
            <person name="Schoenbach C."/>
            <person name="Sekiguchi K."/>
            <person name="Semple C.A."/>
            <person name="Seno S."/>
            <person name="Sessa L."/>
            <person name="Sheng Y."/>
            <person name="Shibata Y."/>
            <person name="Shimada H."/>
            <person name="Shimada K."/>
            <person name="Silva D."/>
            <person name="Sinclair B."/>
            <person name="Sperling S."/>
            <person name="Stupka E."/>
            <person name="Sugiura K."/>
            <person name="Sultana R."/>
            <person name="Takenaka Y."/>
            <person name="Taki K."/>
            <person name="Tammoja K."/>
            <person name="Tan S.L."/>
            <person name="Tang S."/>
            <person name="Taylor M.S."/>
            <person name="Tegner J."/>
            <person name="Teichmann S.A."/>
            <person name="Ueda H.R."/>
            <person name="van Nimwegen E."/>
            <person name="Verardo R."/>
            <person name="Wei C.L."/>
            <person name="Yagi K."/>
            <person name="Yamanishi H."/>
            <person name="Zabarovsky E."/>
            <person name="Zhu S."/>
            <person name="Zimmer A."/>
            <person name="Hide W."/>
            <person name="Bult C."/>
            <person name="Grimmond S.M."/>
            <person name="Teasdale R.D."/>
            <person name="Liu E.T."/>
            <person name="Brusic V."/>
            <person name="Quackenbush J."/>
            <person name="Wahlestedt C."/>
            <person name="Mattick J.S."/>
            <person name="Hume D.A."/>
            <person name="Kai C."/>
            <person name="Sasaki D."/>
            <person name="Tomaru Y."/>
            <person name="Fukuda S."/>
            <person name="Kanamori-Katayama M."/>
            <person name="Suzuki M."/>
            <person name="Aoki J."/>
            <person name="Arakawa T."/>
            <person name="Iida J."/>
            <person name="Imamura K."/>
            <person name="Itoh M."/>
            <person name="Kato T."/>
            <person name="Kawaji H."/>
            <person name="Kawagashira N."/>
            <person name="Kawashima T."/>
            <person name="Kojima M."/>
            <person name="Kondo S."/>
            <person name="Konno H."/>
            <person name="Nakano K."/>
            <person name="Ninomiya N."/>
            <person name="Nishio T."/>
            <person name="Okada M."/>
            <person name="Plessy C."/>
            <person name="Shibata K."/>
            <person name="Shiraki T."/>
            <person name="Suzuki S."/>
            <person name="Tagami M."/>
            <person name="Waki K."/>
            <person name="Watahiki A."/>
            <person name="Okamura-Oho Y."/>
            <person name="Suzuki H."/>
            <person name="Kawai J."/>
            <person name="Hayashizaki Y."/>
        </authorList>
    </citation>
    <scope>NUCLEOTIDE SEQUENCE [LARGE SCALE MRNA] (ISOFORMS 2; 3 AND 4)</scope>
    <source>
        <strain>C57BL/6J</strain>
        <strain>NOD</strain>
        <tissue>Kidney</tissue>
        <tissue>Lung</tissue>
        <tissue>Thymus</tissue>
    </source>
</reference>
<reference key="2">
    <citation type="submission" date="2005-09" db="EMBL/GenBank/DDBJ databases">
        <authorList>
            <person name="Mural R.J."/>
            <person name="Adams M.D."/>
            <person name="Myers E.W."/>
            <person name="Smith H.O."/>
            <person name="Venter J.C."/>
        </authorList>
    </citation>
    <scope>NUCLEOTIDE SEQUENCE [LARGE SCALE GENOMIC DNA]</scope>
</reference>
<reference key="3">
    <citation type="journal article" date="2004" name="Genome Res.">
        <title>The status, quality, and expansion of the NIH full-length cDNA project: the Mammalian Gene Collection (MGC).</title>
        <authorList>
            <consortium name="The MGC Project Team"/>
        </authorList>
    </citation>
    <scope>NUCLEOTIDE SEQUENCE [LARGE SCALE MRNA] (ISOFORM 1)</scope>
    <source>
        <tissue>Limb</tissue>
    </source>
</reference>
<reference key="4">
    <citation type="journal article" date="2005" name="Nat. Genet.">
        <title>Chfr is required for tumor suppression and Aurora A regulation.</title>
        <authorList>
            <person name="Yu X."/>
            <person name="Minter-Dykhouse K."/>
            <person name="Malureanu L."/>
            <person name="Zhao W.-M."/>
            <person name="Zhang D."/>
            <person name="Merkle C.J."/>
            <person name="Ward I.M."/>
            <person name="Saya H."/>
            <person name="Fang G."/>
            <person name="van Deursen J."/>
            <person name="Chen J."/>
        </authorList>
    </citation>
    <scope>FUNCTION</scope>
    <scope>CATALYTIC ACTIVITY</scope>
    <scope>DISRUPTION PHENOTYPE</scope>
</reference>
<reference key="5">
    <citation type="journal article" date="2007" name="Science">
        <title>ATM and ATR substrate analysis reveals extensive protein networks responsive to DNA damage.</title>
        <authorList>
            <person name="Matsuoka S."/>
            <person name="Ballif B.A."/>
            <person name="Smogorzewska A."/>
            <person name="McDonald E.R. III"/>
            <person name="Hurov K.E."/>
            <person name="Luo J."/>
            <person name="Bakalarski C.E."/>
            <person name="Zhao Z."/>
            <person name="Solimini N."/>
            <person name="Lerenthal Y."/>
            <person name="Shiloh Y."/>
            <person name="Gygi S.P."/>
            <person name="Elledge S.J."/>
        </authorList>
    </citation>
    <scope>PHOSPHORYLATION [LARGE SCALE ANALYSIS] AT THR-385</scope>
    <scope>IDENTIFICATION BY MASS SPECTROMETRY [LARGE SCALE ANALYSIS]</scope>
    <source>
        <tissue>Embryonic fibroblast</tissue>
    </source>
</reference>
<evidence type="ECO:0000250" key="1">
    <source>
        <dbReference type="UniProtKB" id="Q96EP1"/>
    </source>
</evidence>
<evidence type="ECO:0000255" key="2">
    <source>
        <dbReference type="PROSITE-ProRule" id="PRU00086"/>
    </source>
</evidence>
<evidence type="ECO:0000255" key="3">
    <source>
        <dbReference type="PROSITE-ProRule" id="PRU00175"/>
    </source>
</evidence>
<evidence type="ECO:0000256" key="4">
    <source>
        <dbReference type="SAM" id="MobiDB-lite"/>
    </source>
</evidence>
<evidence type="ECO:0000269" key="5">
    <source>
    </source>
</evidence>
<evidence type="ECO:0000303" key="6">
    <source>
    </source>
</evidence>
<evidence type="ECO:0000305" key="7"/>
<evidence type="ECO:0007744" key="8">
    <source>
    </source>
</evidence>